<evidence type="ECO:0000255" key="1">
    <source>
        <dbReference type="HAMAP-Rule" id="MF_01633"/>
    </source>
</evidence>
<name>QUEC_LAWIP</name>
<accession>Q1MQ73</accession>
<proteinExistence type="inferred from homology"/>
<reference key="1">
    <citation type="submission" date="2005-11" db="EMBL/GenBank/DDBJ databases">
        <title>The complete genome sequence of Lawsonia intracellularis: the causative agent of proliferative enteropathy.</title>
        <authorList>
            <person name="Kaur K."/>
            <person name="Zhang Q."/>
            <person name="Beckler D."/>
            <person name="Munir S."/>
            <person name="Li L."/>
            <person name="Kinsley K."/>
            <person name="Herron L."/>
            <person name="Peterson A."/>
            <person name="May B."/>
            <person name="Singh S."/>
            <person name="Gebhart C."/>
            <person name="Kapur V."/>
        </authorList>
    </citation>
    <scope>NUCLEOTIDE SEQUENCE [LARGE SCALE GENOMIC DNA]</scope>
    <source>
        <strain>PHE/MN1-00</strain>
    </source>
</reference>
<organism>
    <name type="scientific">Lawsonia intracellularis (strain PHE/MN1-00)</name>
    <dbReference type="NCBI Taxonomy" id="363253"/>
    <lineage>
        <taxon>Bacteria</taxon>
        <taxon>Pseudomonadati</taxon>
        <taxon>Thermodesulfobacteriota</taxon>
        <taxon>Desulfovibrionia</taxon>
        <taxon>Desulfovibrionales</taxon>
        <taxon>Desulfovibrionaceae</taxon>
        <taxon>Lawsonia</taxon>
    </lineage>
</organism>
<feature type="chain" id="PRO_0000255921" description="7-cyano-7-deazaguanine synthase">
    <location>
        <begin position="1"/>
        <end position="238"/>
    </location>
</feature>
<feature type="binding site" evidence="1">
    <location>
        <begin position="12"/>
        <end position="22"/>
    </location>
    <ligand>
        <name>ATP</name>
        <dbReference type="ChEBI" id="CHEBI:30616"/>
    </ligand>
</feature>
<feature type="binding site" evidence="1">
    <location>
        <position position="200"/>
    </location>
    <ligand>
        <name>Zn(2+)</name>
        <dbReference type="ChEBI" id="CHEBI:29105"/>
    </ligand>
</feature>
<feature type="binding site" evidence="1">
    <location>
        <position position="215"/>
    </location>
    <ligand>
        <name>Zn(2+)</name>
        <dbReference type="ChEBI" id="CHEBI:29105"/>
    </ligand>
</feature>
<feature type="binding site" evidence="1">
    <location>
        <position position="218"/>
    </location>
    <ligand>
        <name>Zn(2+)</name>
        <dbReference type="ChEBI" id="CHEBI:29105"/>
    </ligand>
</feature>
<feature type="binding site" evidence="1">
    <location>
        <position position="221"/>
    </location>
    <ligand>
        <name>Zn(2+)</name>
        <dbReference type="ChEBI" id="CHEBI:29105"/>
    </ligand>
</feature>
<gene>
    <name evidence="1" type="primary">queC</name>
    <name type="ordered locus">LI0800</name>
</gene>
<protein>
    <recommendedName>
        <fullName evidence="1">7-cyano-7-deazaguanine synthase</fullName>
        <ecNumber evidence="1">6.3.4.20</ecNumber>
    </recommendedName>
    <alternativeName>
        <fullName evidence="1">7-cyano-7-carbaguanine synthase</fullName>
    </alternativeName>
    <alternativeName>
        <fullName evidence="1">PreQ(0) synthase</fullName>
    </alternativeName>
    <alternativeName>
        <fullName evidence="1">Queuosine biosynthesis protein QueC</fullName>
    </alternativeName>
</protein>
<keyword id="KW-0067">ATP-binding</keyword>
<keyword id="KW-0436">Ligase</keyword>
<keyword id="KW-0479">Metal-binding</keyword>
<keyword id="KW-0547">Nucleotide-binding</keyword>
<keyword id="KW-0671">Queuosine biosynthesis</keyword>
<keyword id="KW-1185">Reference proteome</keyword>
<keyword id="KW-0862">Zinc</keyword>
<sequence length="238" mass="26890">MYHLNQKALLLFSGGQDSGTCLGWALSNFSHIITIGFSYGQRHSVEMQCRTNIRNKISKLSKIWEQRLGEDYIFSLDIFSQLGETAITSELEIVFDKQGLPNTFVPGRNIFFLTIAAAFAWRNSIRHLIIGTCETDFSGYPDCQDNSIKATQLALSLGLGEDITIHTPLMWLTKAQTWELALHLGGSKFVDLIRNETHSCYLNDHTTSHEWGYGCGTCPACKLRKNGWETFLMKKRAN</sequence>
<comment type="function">
    <text evidence="1">Catalyzes the ATP-dependent conversion of 7-carboxy-7-deazaguanine (CDG) to 7-cyano-7-deazaguanine (preQ(0)).</text>
</comment>
<comment type="catalytic activity">
    <reaction evidence="1">
        <text>7-carboxy-7-deazaguanine + NH4(+) + ATP = 7-cyano-7-deazaguanine + ADP + phosphate + H2O + H(+)</text>
        <dbReference type="Rhea" id="RHEA:27982"/>
        <dbReference type="ChEBI" id="CHEBI:15377"/>
        <dbReference type="ChEBI" id="CHEBI:15378"/>
        <dbReference type="ChEBI" id="CHEBI:28938"/>
        <dbReference type="ChEBI" id="CHEBI:30616"/>
        <dbReference type="ChEBI" id="CHEBI:43474"/>
        <dbReference type="ChEBI" id="CHEBI:45075"/>
        <dbReference type="ChEBI" id="CHEBI:61036"/>
        <dbReference type="ChEBI" id="CHEBI:456216"/>
        <dbReference type="EC" id="6.3.4.20"/>
    </reaction>
</comment>
<comment type="cofactor">
    <cofactor evidence="1">
        <name>Zn(2+)</name>
        <dbReference type="ChEBI" id="CHEBI:29105"/>
    </cofactor>
    <text evidence="1">Binds 1 zinc ion per subunit.</text>
</comment>
<comment type="pathway">
    <text evidence="1">Purine metabolism; 7-cyano-7-deazaguanine biosynthesis.</text>
</comment>
<comment type="similarity">
    <text evidence="1">Belongs to the QueC family.</text>
</comment>
<dbReference type="EC" id="6.3.4.20" evidence="1"/>
<dbReference type="EMBL" id="AM180252">
    <property type="protein sequence ID" value="CAJ54854.1"/>
    <property type="molecule type" value="Genomic_DNA"/>
</dbReference>
<dbReference type="RefSeq" id="WP_011526883.1">
    <property type="nucleotide sequence ID" value="NC_008011.1"/>
</dbReference>
<dbReference type="SMR" id="Q1MQ73"/>
<dbReference type="STRING" id="363253.LI0800"/>
<dbReference type="KEGG" id="lip:LI0800"/>
<dbReference type="eggNOG" id="COG0603">
    <property type="taxonomic scope" value="Bacteria"/>
</dbReference>
<dbReference type="HOGENOM" id="CLU_081854_0_0_7"/>
<dbReference type="OrthoDB" id="9789567at2"/>
<dbReference type="UniPathway" id="UPA00391"/>
<dbReference type="Proteomes" id="UP000002430">
    <property type="component" value="Chromosome"/>
</dbReference>
<dbReference type="GO" id="GO:0005524">
    <property type="term" value="F:ATP binding"/>
    <property type="evidence" value="ECO:0007669"/>
    <property type="project" value="UniProtKB-UniRule"/>
</dbReference>
<dbReference type="GO" id="GO:0016879">
    <property type="term" value="F:ligase activity, forming carbon-nitrogen bonds"/>
    <property type="evidence" value="ECO:0007669"/>
    <property type="project" value="UniProtKB-UniRule"/>
</dbReference>
<dbReference type="GO" id="GO:0008270">
    <property type="term" value="F:zinc ion binding"/>
    <property type="evidence" value="ECO:0007669"/>
    <property type="project" value="UniProtKB-UniRule"/>
</dbReference>
<dbReference type="GO" id="GO:0008616">
    <property type="term" value="P:queuosine biosynthetic process"/>
    <property type="evidence" value="ECO:0007669"/>
    <property type="project" value="UniProtKB-UniRule"/>
</dbReference>
<dbReference type="CDD" id="cd01995">
    <property type="entry name" value="QueC-like"/>
    <property type="match status" value="1"/>
</dbReference>
<dbReference type="Gene3D" id="3.40.50.620">
    <property type="entry name" value="HUPs"/>
    <property type="match status" value="1"/>
</dbReference>
<dbReference type="HAMAP" id="MF_01633">
    <property type="entry name" value="QueC"/>
    <property type="match status" value="1"/>
</dbReference>
<dbReference type="InterPro" id="IPR018317">
    <property type="entry name" value="QueC"/>
</dbReference>
<dbReference type="InterPro" id="IPR014729">
    <property type="entry name" value="Rossmann-like_a/b/a_fold"/>
</dbReference>
<dbReference type="NCBIfam" id="TIGR00364">
    <property type="entry name" value="7-cyano-7-deazaguanine synthase QueC"/>
    <property type="match status" value="1"/>
</dbReference>
<dbReference type="PANTHER" id="PTHR42914">
    <property type="entry name" value="7-CYANO-7-DEAZAGUANINE SYNTHASE"/>
    <property type="match status" value="1"/>
</dbReference>
<dbReference type="PANTHER" id="PTHR42914:SF1">
    <property type="entry name" value="7-CYANO-7-DEAZAGUANINE SYNTHASE"/>
    <property type="match status" value="1"/>
</dbReference>
<dbReference type="Pfam" id="PF06508">
    <property type="entry name" value="QueC"/>
    <property type="match status" value="1"/>
</dbReference>
<dbReference type="PIRSF" id="PIRSF006293">
    <property type="entry name" value="ExsB"/>
    <property type="match status" value="1"/>
</dbReference>
<dbReference type="SUPFAM" id="SSF52402">
    <property type="entry name" value="Adenine nucleotide alpha hydrolases-like"/>
    <property type="match status" value="1"/>
</dbReference>